<sequence length="265" mass="28130">MLLTIDVGNTHTVLGLFDGEEIVEHWRISTDARRTADELAVLLQGLMGMHPLLGMELGDGIEGIAICATVPSVLHELREVTRRYYGDVPAVLVEPGVKTGVPILMDNPKEVGADRIINAVAAVELYGGPAIVVDFGTATTFDAVSPRGEYTGGVIAPGIEISVEALGVKGAQLRKIELARPRSVIGKNTVEAMQSGIVYGFAGQVDGVVARMKKELAADPDDVTVIATGGLAPMVLGESSVIDEHEPWLTLIGLRLVYERNVSRA</sequence>
<protein>
    <recommendedName>
        <fullName evidence="1">Type III pantothenate kinase</fullName>
        <ecNumber evidence="1">2.7.1.33</ecNumber>
    </recommendedName>
    <alternativeName>
        <fullName evidence="1">PanK-III</fullName>
    </alternativeName>
    <alternativeName>
        <fullName evidence="1">Pantothenic acid kinase</fullName>
    </alternativeName>
</protein>
<reference key="1">
    <citation type="journal article" date="2008" name="J. Bacteriol.">
        <title>Genome sequence of the streptomycin-producing microorganism Streptomyces griseus IFO 13350.</title>
        <authorList>
            <person name="Ohnishi Y."/>
            <person name="Ishikawa J."/>
            <person name="Hara H."/>
            <person name="Suzuki H."/>
            <person name="Ikenoya M."/>
            <person name="Ikeda H."/>
            <person name="Yamashita A."/>
            <person name="Hattori M."/>
            <person name="Horinouchi S."/>
        </authorList>
    </citation>
    <scope>NUCLEOTIDE SEQUENCE [LARGE SCALE GENOMIC DNA]</scope>
    <source>
        <strain>JCM 4626 / CBS 651.72 / NBRC 13350 / KCC S-0626 / ISP 5235</strain>
    </source>
</reference>
<accession>B1VSI6</accession>
<keyword id="KW-0067">ATP-binding</keyword>
<keyword id="KW-0173">Coenzyme A biosynthesis</keyword>
<keyword id="KW-0963">Cytoplasm</keyword>
<keyword id="KW-0418">Kinase</keyword>
<keyword id="KW-0479">Metal-binding</keyword>
<keyword id="KW-0547">Nucleotide-binding</keyword>
<keyword id="KW-0630">Potassium</keyword>
<keyword id="KW-0808">Transferase</keyword>
<dbReference type="EC" id="2.7.1.33" evidence="1"/>
<dbReference type="EMBL" id="AP009493">
    <property type="protein sequence ID" value="BAG20940.1"/>
    <property type="molecule type" value="Genomic_DNA"/>
</dbReference>
<dbReference type="RefSeq" id="WP_003968292.1">
    <property type="nucleotide sequence ID" value="NC_010572.1"/>
</dbReference>
<dbReference type="SMR" id="B1VSI6"/>
<dbReference type="KEGG" id="sgr:SGR_4111"/>
<dbReference type="eggNOG" id="COG1521">
    <property type="taxonomic scope" value="Bacteria"/>
</dbReference>
<dbReference type="HOGENOM" id="CLU_066627_1_0_11"/>
<dbReference type="UniPathway" id="UPA00241">
    <property type="reaction ID" value="UER00352"/>
</dbReference>
<dbReference type="Proteomes" id="UP000001685">
    <property type="component" value="Chromosome"/>
</dbReference>
<dbReference type="GO" id="GO:0005737">
    <property type="term" value="C:cytoplasm"/>
    <property type="evidence" value="ECO:0007669"/>
    <property type="project" value="UniProtKB-SubCell"/>
</dbReference>
<dbReference type="GO" id="GO:0005524">
    <property type="term" value="F:ATP binding"/>
    <property type="evidence" value="ECO:0007669"/>
    <property type="project" value="UniProtKB-UniRule"/>
</dbReference>
<dbReference type="GO" id="GO:0046872">
    <property type="term" value="F:metal ion binding"/>
    <property type="evidence" value="ECO:0007669"/>
    <property type="project" value="UniProtKB-KW"/>
</dbReference>
<dbReference type="GO" id="GO:0004594">
    <property type="term" value="F:pantothenate kinase activity"/>
    <property type="evidence" value="ECO:0007669"/>
    <property type="project" value="UniProtKB-UniRule"/>
</dbReference>
<dbReference type="GO" id="GO:0015937">
    <property type="term" value="P:coenzyme A biosynthetic process"/>
    <property type="evidence" value="ECO:0007669"/>
    <property type="project" value="UniProtKB-UniRule"/>
</dbReference>
<dbReference type="CDD" id="cd24015">
    <property type="entry name" value="ASKHA_NBD_PanK-III"/>
    <property type="match status" value="1"/>
</dbReference>
<dbReference type="Gene3D" id="3.30.420.40">
    <property type="match status" value="2"/>
</dbReference>
<dbReference type="HAMAP" id="MF_01274">
    <property type="entry name" value="Pantothen_kinase_3"/>
    <property type="match status" value="1"/>
</dbReference>
<dbReference type="InterPro" id="IPR043129">
    <property type="entry name" value="ATPase_NBD"/>
</dbReference>
<dbReference type="InterPro" id="IPR004619">
    <property type="entry name" value="Type_III_PanK"/>
</dbReference>
<dbReference type="NCBIfam" id="TIGR00671">
    <property type="entry name" value="baf"/>
    <property type="match status" value="1"/>
</dbReference>
<dbReference type="NCBIfam" id="NF009845">
    <property type="entry name" value="PRK13318.1-3"/>
    <property type="match status" value="1"/>
</dbReference>
<dbReference type="NCBIfam" id="NF009855">
    <property type="entry name" value="PRK13321.1"/>
    <property type="match status" value="1"/>
</dbReference>
<dbReference type="PANTHER" id="PTHR34265">
    <property type="entry name" value="TYPE III PANTOTHENATE KINASE"/>
    <property type="match status" value="1"/>
</dbReference>
<dbReference type="PANTHER" id="PTHR34265:SF1">
    <property type="entry name" value="TYPE III PANTOTHENATE KINASE"/>
    <property type="match status" value="1"/>
</dbReference>
<dbReference type="Pfam" id="PF03309">
    <property type="entry name" value="Pan_kinase"/>
    <property type="match status" value="1"/>
</dbReference>
<dbReference type="SUPFAM" id="SSF53067">
    <property type="entry name" value="Actin-like ATPase domain"/>
    <property type="match status" value="2"/>
</dbReference>
<feature type="chain" id="PRO_1000140256" description="Type III pantothenate kinase">
    <location>
        <begin position="1"/>
        <end position="265"/>
    </location>
</feature>
<feature type="active site" description="Proton acceptor" evidence="1">
    <location>
        <position position="114"/>
    </location>
</feature>
<feature type="binding site" evidence="1">
    <location>
        <begin position="6"/>
        <end position="13"/>
    </location>
    <ligand>
        <name>ATP</name>
        <dbReference type="ChEBI" id="CHEBI:30616"/>
    </ligand>
</feature>
<feature type="binding site" evidence="1">
    <location>
        <begin position="112"/>
        <end position="115"/>
    </location>
    <ligand>
        <name>substrate</name>
    </ligand>
</feature>
<feature type="binding site" evidence="1">
    <location>
        <position position="134"/>
    </location>
    <ligand>
        <name>K(+)</name>
        <dbReference type="ChEBI" id="CHEBI:29103"/>
    </ligand>
</feature>
<feature type="binding site" evidence="1">
    <location>
        <position position="137"/>
    </location>
    <ligand>
        <name>ATP</name>
        <dbReference type="ChEBI" id="CHEBI:30616"/>
    </ligand>
</feature>
<feature type="binding site" evidence="1">
    <location>
        <position position="189"/>
    </location>
    <ligand>
        <name>substrate</name>
    </ligand>
</feature>
<comment type="function">
    <text evidence="1">Catalyzes the phosphorylation of pantothenate (Pan), the first step in CoA biosynthesis.</text>
</comment>
<comment type="catalytic activity">
    <reaction evidence="1">
        <text>(R)-pantothenate + ATP = (R)-4'-phosphopantothenate + ADP + H(+)</text>
        <dbReference type="Rhea" id="RHEA:16373"/>
        <dbReference type="ChEBI" id="CHEBI:10986"/>
        <dbReference type="ChEBI" id="CHEBI:15378"/>
        <dbReference type="ChEBI" id="CHEBI:29032"/>
        <dbReference type="ChEBI" id="CHEBI:30616"/>
        <dbReference type="ChEBI" id="CHEBI:456216"/>
        <dbReference type="EC" id="2.7.1.33"/>
    </reaction>
</comment>
<comment type="cofactor">
    <cofactor evidence="1">
        <name>NH4(+)</name>
        <dbReference type="ChEBI" id="CHEBI:28938"/>
    </cofactor>
    <cofactor evidence="1">
        <name>K(+)</name>
        <dbReference type="ChEBI" id="CHEBI:29103"/>
    </cofactor>
    <text evidence="1">A monovalent cation. Ammonium or potassium.</text>
</comment>
<comment type="pathway">
    <text evidence="1">Cofactor biosynthesis; coenzyme A biosynthesis; CoA from (R)-pantothenate: step 1/5.</text>
</comment>
<comment type="subunit">
    <text evidence="1">Homodimer.</text>
</comment>
<comment type="subcellular location">
    <subcellularLocation>
        <location evidence="1">Cytoplasm</location>
    </subcellularLocation>
</comment>
<comment type="similarity">
    <text evidence="1">Belongs to the type III pantothenate kinase family.</text>
</comment>
<name>COAX_STRGG</name>
<evidence type="ECO:0000255" key="1">
    <source>
        <dbReference type="HAMAP-Rule" id="MF_01274"/>
    </source>
</evidence>
<proteinExistence type="inferred from homology"/>
<gene>
    <name evidence="1" type="primary">coaX</name>
    <name type="ordered locus">SGR_4111</name>
</gene>
<organism>
    <name type="scientific">Streptomyces griseus subsp. griseus (strain JCM 4626 / CBS 651.72 / NBRC 13350 / KCC S-0626 / ISP 5235)</name>
    <dbReference type="NCBI Taxonomy" id="455632"/>
    <lineage>
        <taxon>Bacteria</taxon>
        <taxon>Bacillati</taxon>
        <taxon>Actinomycetota</taxon>
        <taxon>Actinomycetes</taxon>
        <taxon>Kitasatosporales</taxon>
        <taxon>Streptomycetaceae</taxon>
        <taxon>Streptomyces</taxon>
    </lineage>
</organism>